<gene>
    <name evidence="1" type="primary">scpA</name>
    <name type="ordered locus">SPJ_1781</name>
</gene>
<evidence type="ECO:0000255" key="1">
    <source>
        <dbReference type="HAMAP-Rule" id="MF_01805"/>
    </source>
</evidence>
<keyword id="KW-0131">Cell cycle</keyword>
<keyword id="KW-0132">Cell division</keyword>
<keyword id="KW-0159">Chromosome partition</keyword>
<keyword id="KW-0963">Cytoplasm</keyword>
<comment type="function">
    <text evidence="1">Participates in chromosomal partition during cell division. May act via the formation of a condensin-like complex containing Smc and ScpB that pull DNA away from mid-cell into both cell halves.</text>
</comment>
<comment type="subunit">
    <text evidence="1">Component of a cohesin-like complex composed of ScpA, ScpB and the Smc homodimer, in which ScpA and ScpB bind to the head domain of Smc. The presence of the three proteins is required for the association of the complex with DNA.</text>
</comment>
<comment type="subcellular location">
    <subcellularLocation>
        <location evidence="1">Cytoplasm</location>
    </subcellularLocation>
    <text evidence="1">Associated with two foci at the outer edges of the nucleoid region in young cells, and at four foci within both cell halves in older cells.</text>
</comment>
<comment type="similarity">
    <text evidence="1">Belongs to the ScpA family.</text>
</comment>
<organism>
    <name type="scientific">Streptococcus pneumoniae (strain JJA)</name>
    <dbReference type="NCBI Taxonomy" id="488222"/>
    <lineage>
        <taxon>Bacteria</taxon>
        <taxon>Bacillati</taxon>
        <taxon>Bacillota</taxon>
        <taxon>Bacilli</taxon>
        <taxon>Lactobacillales</taxon>
        <taxon>Streptococcaceae</taxon>
        <taxon>Streptococcus</taxon>
    </lineage>
</organism>
<protein>
    <recommendedName>
        <fullName evidence="1">Segregation and condensation protein A</fullName>
    </recommendedName>
</protein>
<feature type="chain" id="PRO_1000187575" description="Segregation and condensation protein A">
    <location>
        <begin position="1"/>
        <end position="242"/>
    </location>
</feature>
<name>SCPA_STRZJ</name>
<reference key="1">
    <citation type="journal article" date="2010" name="Genome Biol.">
        <title>Structure and dynamics of the pan-genome of Streptococcus pneumoniae and closely related species.</title>
        <authorList>
            <person name="Donati C."/>
            <person name="Hiller N.L."/>
            <person name="Tettelin H."/>
            <person name="Muzzi A."/>
            <person name="Croucher N.J."/>
            <person name="Angiuoli S.V."/>
            <person name="Oggioni M."/>
            <person name="Dunning Hotopp J.C."/>
            <person name="Hu F.Z."/>
            <person name="Riley D.R."/>
            <person name="Covacci A."/>
            <person name="Mitchell T.J."/>
            <person name="Bentley S.D."/>
            <person name="Kilian M."/>
            <person name="Ehrlich G.D."/>
            <person name="Rappuoli R."/>
            <person name="Moxon E.R."/>
            <person name="Masignani V."/>
        </authorList>
    </citation>
    <scope>NUCLEOTIDE SEQUENCE [LARGE SCALE GENOMIC DNA]</scope>
    <source>
        <strain>JJA</strain>
    </source>
</reference>
<sequence length="242" mass="28270">MDIKLKDFEGPLDLLLHLVSKYQMDIYDVPITEVIEQYLAYVSTLQAMRLEVTGEYMVMASQLMLIKSRKLLPKVAEVTDLGDDLEQDLLSQIEEYRKFKLLGEHLEAKHQERAQYYSKAPTELIYEDAELVHDKTTIDLFLAFSNILAKKKEEFAQNHTTILRDEYKIEDMMIIVKESLIGRDQLRLQDLFKEAQNVQEVITLFLATLELIKTQELILVQEESFGDIYLMEKKEESQVPQS</sequence>
<dbReference type="EMBL" id="CP000919">
    <property type="protein sequence ID" value="ACO19466.1"/>
    <property type="molecule type" value="Genomic_DNA"/>
</dbReference>
<dbReference type="RefSeq" id="WP_000351907.1">
    <property type="nucleotide sequence ID" value="NC_012466.1"/>
</dbReference>
<dbReference type="SMR" id="C1CGA0"/>
<dbReference type="KEGG" id="sjj:SPJ_1781"/>
<dbReference type="HOGENOM" id="CLU_038686_3_3_9"/>
<dbReference type="Proteomes" id="UP000002206">
    <property type="component" value="Chromosome"/>
</dbReference>
<dbReference type="GO" id="GO:0005737">
    <property type="term" value="C:cytoplasm"/>
    <property type="evidence" value="ECO:0007669"/>
    <property type="project" value="UniProtKB-SubCell"/>
</dbReference>
<dbReference type="GO" id="GO:0051301">
    <property type="term" value="P:cell division"/>
    <property type="evidence" value="ECO:0007669"/>
    <property type="project" value="UniProtKB-KW"/>
</dbReference>
<dbReference type="GO" id="GO:0007059">
    <property type="term" value="P:chromosome segregation"/>
    <property type="evidence" value="ECO:0007669"/>
    <property type="project" value="UniProtKB-UniRule"/>
</dbReference>
<dbReference type="GO" id="GO:0006260">
    <property type="term" value="P:DNA replication"/>
    <property type="evidence" value="ECO:0007669"/>
    <property type="project" value="UniProtKB-UniRule"/>
</dbReference>
<dbReference type="Gene3D" id="6.10.250.2410">
    <property type="match status" value="1"/>
</dbReference>
<dbReference type="Gene3D" id="1.10.10.580">
    <property type="entry name" value="Structural maintenance of chromosome 1. Chain E"/>
    <property type="match status" value="1"/>
</dbReference>
<dbReference type="HAMAP" id="MF_01805">
    <property type="entry name" value="ScpA"/>
    <property type="match status" value="1"/>
</dbReference>
<dbReference type="InterPro" id="IPR003768">
    <property type="entry name" value="ScpA"/>
</dbReference>
<dbReference type="InterPro" id="IPR023093">
    <property type="entry name" value="ScpA-like_C"/>
</dbReference>
<dbReference type="NCBIfam" id="NF000993">
    <property type="entry name" value="PRK00104.1-2"/>
    <property type="match status" value="1"/>
</dbReference>
<dbReference type="PANTHER" id="PTHR33969">
    <property type="entry name" value="SEGREGATION AND CONDENSATION PROTEIN A"/>
    <property type="match status" value="1"/>
</dbReference>
<dbReference type="PANTHER" id="PTHR33969:SF2">
    <property type="entry name" value="SEGREGATION AND CONDENSATION PROTEIN A"/>
    <property type="match status" value="1"/>
</dbReference>
<dbReference type="Pfam" id="PF02616">
    <property type="entry name" value="SMC_ScpA"/>
    <property type="match status" value="1"/>
</dbReference>
<accession>C1CGA0</accession>
<proteinExistence type="inferred from homology"/>